<sequence length="282" mass="31416">MLPLLRCVPRVLGSAVPSLRAAAPASPFRQLLTPGPRLCARPFGLLSVRAGSERRPGLLRPRGPCACGCGCGLLHTEGDKAFVDFLNDEIKEERKIQKHKTLPKMSGGWELELNGTEAKLMRKVAGEKITVTFNINNSIPPTFDGEEEPTQGQKVEEQEPELTSTPNFVVEVIKNDDGKKALVLDCHYPEDEVGQEDEAESDIFSIREVSFQSSGESEWKDTNYTLNTDSLDWALYDHLMDFLADRGVDNTFADELVELSTALEHQEYISFLEDLKSFVKSQ</sequence>
<feature type="transit peptide" description="Mitochondrion" evidence="1">
    <location>
        <begin position="1"/>
        <end position="70"/>
    </location>
</feature>
<feature type="chain" id="PRO_0000238677" description="Complement component 1 Q subcomponent-binding protein, mitochondrial">
    <location>
        <begin position="71"/>
        <end position="282"/>
    </location>
</feature>
<feature type="region of interest" description="C1q binding" evidence="1">
    <location>
        <begin position="76"/>
        <end position="93"/>
    </location>
</feature>
<feature type="region of interest" description="Disordered" evidence="5">
    <location>
        <begin position="137"/>
        <end position="163"/>
    </location>
</feature>
<feature type="region of interest" description="Interaction with MAVS" evidence="1">
    <location>
        <begin position="168"/>
        <end position="213"/>
    </location>
</feature>
<feature type="modified residue" description="N6-acetyllysine" evidence="4">
    <location>
        <position position="91"/>
    </location>
</feature>
<feature type="modified residue" description="Phosphotyrosine" evidence="4">
    <location>
        <position position="188"/>
    </location>
</feature>
<feature type="modified residue" description="Phosphoserine" evidence="4">
    <location>
        <position position="201"/>
    </location>
</feature>
<feature type="modified residue" description="Phosphoserine" evidence="4">
    <location>
        <position position="205"/>
    </location>
</feature>
<feature type="sequence conflict" description="In Ref. 1; AAF74122." evidence="8" ref="1">
    <original>A</original>
    <variation>P</variation>
    <location>
        <position position="21"/>
    </location>
</feature>
<feature type="sequence conflict" description="In Ref. 2; AAK83694/AAK83695." evidence="8" ref="2">
    <location>
        <position position="176"/>
    </location>
</feature>
<proteinExistence type="evidence at protein level"/>
<accession>Q9MZE0</accession>
<accession>Q95J15</accession>
<protein>
    <recommendedName>
        <fullName>Complement component 1 Q subcomponent-binding protein, mitochondrial</fullName>
    </recommendedName>
    <alternativeName>
        <fullName>Globular head receptor of C1 complement protein</fullName>
    </alternativeName>
    <alternativeName>
        <fullName>Mitochondrial matrix protein p32</fullName>
    </alternativeName>
</protein>
<organism>
    <name type="scientific">Chlorocebus aethiops</name>
    <name type="common">Green monkey</name>
    <name type="synonym">Cercopithecus aethiops</name>
    <dbReference type="NCBI Taxonomy" id="9534"/>
    <lineage>
        <taxon>Eukaryota</taxon>
        <taxon>Metazoa</taxon>
        <taxon>Chordata</taxon>
        <taxon>Craniata</taxon>
        <taxon>Vertebrata</taxon>
        <taxon>Euteleostomi</taxon>
        <taxon>Mammalia</taxon>
        <taxon>Eutheria</taxon>
        <taxon>Euarchontoglires</taxon>
        <taxon>Primates</taxon>
        <taxon>Haplorrhini</taxon>
        <taxon>Catarrhini</taxon>
        <taxon>Cercopithecidae</taxon>
        <taxon>Cercopithecinae</taxon>
        <taxon>Chlorocebus</taxon>
    </lineage>
</organism>
<gene>
    <name type="primary">C1QBP</name>
</gene>
<keyword id="KW-0007">Acetylation</keyword>
<keyword id="KW-1064">Adaptive immunity</keyword>
<keyword id="KW-0053">Apoptosis</keyword>
<keyword id="KW-1003">Cell membrane</keyword>
<keyword id="KW-0180">Complement pathway</keyword>
<keyword id="KW-0963">Cytoplasm</keyword>
<keyword id="KW-0903">Direct protein sequencing</keyword>
<keyword id="KW-0227">DNA damage</keyword>
<keyword id="KW-0945">Host-virus interaction</keyword>
<keyword id="KW-0391">Immunity</keyword>
<keyword id="KW-0399">Innate immunity</keyword>
<keyword id="KW-0472">Membrane</keyword>
<keyword id="KW-0496">Mitochondrion</keyword>
<keyword id="KW-0507">mRNA processing</keyword>
<keyword id="KW-0508">mRNA splicing</keyword>
<keyword id="KW-0539">Nucleus</keyword>
<keyword id="KW-0597">Phosphoprotein</keyword>
<keyword id="KW-0690">Ribosome biogenesis</keyword>
<keyword id="KW-0964">Secreted</keyword>
<keyword id="KW-0804">Transcription</keyword>
<keyword id="KW-0805">Transcription regulation</keyword>
<keyword id="KW-0809">Transit peptide</keyword>
<reference key="1">
    <citation type="journal article" date="2000" name="J. Virol.">
        <title>Rubella virus capsid associates with host cell protein p32 and localizes to mitochondria.</title>
        <authorList>
            <person name="Beatch M.D."/>
            <person name="Hobman T.C."/>
        </authorList>
    </citation>
    <scope>NUCLEOTIDE SEQUENCE [MRNA]</scope>
    <scope>SUBCELLULAR LOCATION</scope>
    <scope>INTERACTION WITH RUBELLA VIRUS CAPSID</scope>
</reference>
<reference key="2">
    <citation type="submission" date="2000-06" db="EMBL/GenBank/DDBJ databases">
        <title>Complete coding sequence analysis of simian homolog of gC1Q-R.</title>
        <authorList>
            <person name="Krishna Mohan K.V."/>
            <person name="Atreya C.D."/>
        </authorList>
    </citation>
    <scope>NUCLEOTIDE SEQUENCE [MRNA]</scope>
</reference>
<reference key="3">
    <citation type="journal article" date="2000" name="EMBO J.">
        <title>gC1q-R/p32, a C1q-binding protein, is a receptor for the InlB invasion protein of Listeria monocytogenes.</title>
        <authorList>
            <person name="Braun L."/>
            <person name="Ghebrehiwet B."/>
            <person name="Cossart P."/>
        </authorList>
    </citation>
    <scope>PROTEIN SEQUENCE OF 155-170</scope>
    <scope>FUNCTION (MICROBIAL INFECTION)</scope>
    <scope>INTERACTION WITH L.MONOCYTOGENES INLB</scope>
    <scope>SUBCELLULAR LOCATION</scope>
</reference>
<name>C1QBP_CHLAE</name>
<comment type="function">
    <text evidence="2 4">Multifunctional and multicompartmental protein involved in inflammation and infection processes, ribosome biogenesis, protein synthesis in mitochondria, regulation of apoptosis, transcriptional regulation and pre-mRNA splicing. At the cell surface is thought to act as an endothelial receptor for plasma proteins of the complement and kallikrein-kinin cascades. Putative receptor for C1q; specifically binds to the globular 'heads' of C1q thus inhibiting C1; may perform the receptor function through a complex with C1qR/CD93. In complex with cytokeratin-1/KRT1 is a high affinity receptor for kininogen-1/HMWK. Can also bind other plasma proteins, such as coagulation factor XII leading to its autoactivation. May function to bind initially fluid kininogen-1 to the cell membrane. The secreted form may enhance both extrinsic and intrinsic coagulation pathways. It is postulated that the cell surface form requires docking with transmembrane proteins for downstream signaling which might be specific for a cell-type or response. By acting as C1q receptor is involved in chemotaxis of immature dendritic cells and neutrophils and is proposed to signal through CD209/DC-SIGN on immature dendritic cells, through integrin alpha-4/beta-1 during trophoblast invasion of the decidua, and through integrin beta-1 during endothelial cell adhesion and spreading. Signaling involved in inhibition of innate immune response is implicating the PI3K-AKT/PKB pathway. Required for protein synthesis in mitochondria (By similarity). In mitochondrial translation may be involved in formation of functional 55S mitoribosomes; the function seems to involve its RNA-binding activity. Acts as a RNA modification reader, which specifically recognizes and binds mitochondrial RNAs modified by C5-methylcytosine (m5C) in response to stress, and promotes recruitment of the mitochondrial degradosome complex, leading to their degradation (By similarity). May be involved in the nucleolar ribosome maturation process; the function may involve the exchange of FBL for RRP1 in the association with pre-ribosome particles (By similarity). Involved in regulation of RNA splicing by inhibiting the RNA-binding capacity of SRSF1 and its phosphorylation (By similarity). Is required for the nuclear translocation of splicing factor U2AF1L4 (By similarity). Involved in regulation of CDKN2A- and HRK-mediated apoptosis. Stabilizes mitochondrial CDKN2A isoform smARF. May be involved in regulation of FOXC1 transcriptional activity and NFY/CCAAT-binding factor complex-mediated transcription. May play a role in antibacterial defense as it can bind to cell surface hyaluronan and inhibit Streptococcus pneumoniae hyaluronate lyase. May be involved in modulation of the immune response; ligation by HCV core protein is resulting in suppression of interleukin-12 production in monocyte-derived dendritic cells. Involved in regulation of antiviral response by inhibiting RIGI- and IFIH1-mediated signaling pathways probably involving its association with MAVS after viral infection. Acts as a regulator of DNA repair via homologous recombination by inhibiting the activity of MRE11: interacts with unphosphorylated MRE11 and RAD50 in absence of DNA damage, preventing formation and activity of the MRN complex. Following DNA damage, dissociates from phosphorylated MRE11, allowing formation of the MRN complex (By similarity).</text>
</comment>
<comment type="function">
    <text evidence="6">(Microbial infection) During bacterial infection processes acts as an attachment site for microbial proteins, including Listeria monocytogenes internalin B (InlB).</text>
</comment>
<comment type="subunit">
    <text evidence="2 3 4">Homotrimer; three monomers form a donut-shaped structure with an unusually asymmetric charge distribution on the surface. Interacts with CDK13, HRK, VTN, NFYB, ADRA1B, FOXC1, DDX21, DDX50, NCL, SRSF1 and SRSF9. Interacts with CD93; the association may represent a cell surface C1q receptor. Interacts with KRT1; the association represents a cell surface kininogen receptor. Interacts with CD209; the interaction is indicative for a C1q:C1QBP:CD209 signaling complex. Interacts with FBL and RRP1; the respective interactions with C1QBP are competitive. Probably associates with the mitoribosome. Interacts with MAVS; the interaction occurs upon viral transfection. Interacts with PPIF. Interacts with U2AF1L4. Interacts with PLEKHN1. Interacts with VGF-derived peptide TLQP-21. Interacts with MRE11 and RAD50; forming the MRC (MRE11-RAD50-C1QBP) complex that inhibits the activity of MRE11 (By similarity).</text>
</comment>
<comment type="subunit">
    <text evidence="7">(Microbial infection) Interacts with Rubella virus capsid protein; the interaction occurs in mitochondria.</text>
</comment>
<comment type="subunit">
    <text evidence="6">(Microbial infection) Interacts with L.monocytogenes InlB.</text>
</comment>
<comment type="interaction">
    <interactant intactId="EBI-6375765">
        <id>Q9MZE0</id>
    </interactant>
    <interactant intactId="EBI-1379295">
        <id>P0DQD2</id>
        <label>inlB</label>
    </interactant>
    <organismsDiffer>true</organismsDiffer>
    <experiments>3</experiments>
</comment>
<comment type="interaction">
    <interactant intactId="EBI-6375765">
        <id>Q9MZE0</id>
    </interactant>
    <interactant intactId="EBI-6383633">
        <id>PRO_0000240177</id>
        <dbReference type="UniProtKB" id="O40955"/>
    </interactant>
    <organismsDiffer>true</organismsDiffer>
    <experiments>5</experiments>
</comment>
<comment type="interaction">
    <interactant intactId="EBI-6375765">
        <id>Q9MZE0</id>
    </interactant>
    <interactant intactId="EBI-6377932">
        <id>PRO_0000041308</id>
        <dbReference type="UniProtKB" id="P07566"/>
    </interactant>
    <organismsDiffer>true</organismsDiffer>
    <experiments>3</experiments>
</comment>
<comment type="subcellular location">
    <subcellularLocation>
        <location evidence="7">Mitochondrion matrix</location>
    </subcellularLocation>
    <subcellularLocation>
        <location evidence="4">Nucleus</location>
    </subcellularLocation>
    <subcellularLocation>
        <location evidence="6">Cell membrane</location>
        <topology evidence="4">Peripheral membrane protein</topology>
        <orientation evidence="4">Extracellular side</orientation>
    </subcellularLocation>
    <subcellularLocation>
        <location evidence="4">Secreted</location>
    </subcellularLocation>
    <subcellularLocation>
        <location evidence="4">Cytoplasm</location>
    </subcellularLocation>
    <subcellularLocation>
        <location evidence="4">Nucleus</location>
        <location evidence="4">Nucleolus</location>
    </subcellularLocation>
    <text evidence="4">Seems to be predominantly localized to mitochondria. Secreted by activated lymphocytes.</text>
</comment>
<comment type="similarity">
    <text evidence="8">Belongs to the MAM33 family.</text>
</comment>
<dbReference type="EMBL" id="AF238300">
    <property type="protein sequence ID" value="AAF74122.1"/>
    <property type="molecule type" value="mRNA"/>
</dbReference>
<dbReference type="EMBL" id="AF283278">
    <property type="protein sequence ID" value="AAK83694.1"/>
    <property type="molecule type" value="mRNA"/>
</dbReference>
<dbReference type="EMBL" id="AF283279">
    <property type="protein sequence ID" value="AAK83695.1"/>
    <property type="molecule type" value="mRNA"/>
</dbReference>
<dbReference type="SMR" id="Q9MZE0"/>
<dbReference type="IntAct" id="Q9MZE0">
    <property type="interactions" value="4"/>
</dbReference>
<dbReference type="GO" id="GO:0009986">
    <property type="term" value="C:cell surface"/>
    <property type="evidence" value="ECO:0007669"/>
    <property type="project" value="TreeGrafter"/>
</dbReference>
<dbReference type="GO" id="GO:0005737">
    <property type="term" value="C:cytoplasm"/>
    <property type="evidence" value="ECO:0000250"/>
    <property type="project" value="UniProtKB"/>
</dbReference>
<dbReference type="GO" id="GO:0005576">
    <property type="term" value="C:extracellular region"/>
    <property type="evidence" value="ECO:0007669"/>
    <property type="project" value="UniProtKB-SubCell"/>
</dbReference>
<dbReference type="GO" id="GO:0005759">
    <property type="term" value="C:mitochondrial matrix"/>
    <property type="evidence" value="ECO:0007669"/>
    <property type="project" value="UniProtKB-SubCell"/>
</dbReference>
<dbReference type="GO" id="GO:0005730">
    <property type="term" value="C:nucleolus"/>
    <property type="evidence" value="ECO:0007669"/>
    <property type="project" value="UniProtKB-SubCell"/>
</dbReference>
<dbReference type="GO" id="GO:0005634">
    <property type="term" value="C:nucleus"/>
    <property type="evidence" value="ECO:0000250"/>
    <property type="project" value="UniProtKB"/>
</dbReference>
<dbReference type="GO" id="GO:0005886">
    <property type="term" value="C:plasma membrane"/>
    <property type="evidence" value="ECO:0007669"/>
    <property type="project" value="UniProtKB-SubCell"/>
</dbReference>
<dbReference type="GO" id="GO:0031690">
    <property type="term" value="F:adrenergic receptor binding"/>
    <property type="evidence" value="ECO:0000250"/>
    <property type="project" value="UniProtKB"/>
</dbReference>
<dbReference type="GO" id="GO:0001849">
    <property type="term" value="F:complement component C1q complex binding"/>
    <property type="evidence" value="ECO:0000250"/>
    <property type="project" value="UniProtKB"/>
</dbReference>
<dbReference type="GO" id="GO:0004857">
    <property type="term" value="F:enzyme inhibitor activity"/>
    <property type="evidence" value="ECO:0000250"/>
    <property type="project" value="UniProtKB"/>
</dbReference>
<dbReference type="GO" id="GO:0005540">
    <property type="term" value="F:hyaluronic acid binding"/>
    <property type="evidence" value="ECO:0000250"/>
    <property type="project" value="UniProtKB"/>
</dbReference>
<dbReference type="GO" id="GO:0030984">
    <property type="term" value="F:kininogen binding"/>
    <property type="evidence" value="ECO:0000250"/>
    <property type="project" value="UniProtKB"/>
</dbReference>
<dbReference type="GO" id="GO:0097177">
    <property type="term" value="F:mitochondrial ribosome binding"/>
    <property type="evidence" value="ECO:0000250"/>
    <property type="project" value="UniProtKB"/>
</dbReference>
<dbReference type="GO" id="GO:0003729">
    <property type="term" value="F:mRNA binding"/>
    <property type="evidence" value="ECO:0000250"/>
    <property type="project" value="UniProtKB"/>
</dbReference>
<dbReference type="GO" id="GO:0003714">
    <property type="term" value="F:transcription corepressor activity"/>
    <property type="evidence" value="ECO:0000250"/>
    <property type="project" value="UniProtKB"/>
</dbReference>
<dbReference type="GO" id="GO:0006915">
    <property type="term" value="P:apoptotic process"/>
    <property type="evidence" value="ECO:0007669"/>
    <property type="project" value="UniProtKB-KW"/>
</dbReference>
<dbReference type="GO" id="GO:0006958">
    <property type="term" value="P:complement activation, classical pathway"/>
    <property type="evidence" value="ECO:0007669"/>
    <property type="project" value="UniProtKB-KW"/>
</dbReference>
<dbReference type="GO" id="GO:0042256">
    <property type="term" value="P:cytosolic ribosome assembly"/>
    <property type="evidence" value="ECO:0000250"/>
    <property type="project" value="UniProtKB"/>
</dbReference>
<dbReference type="GO" id="GO:0006974">
    <property type="term" value="P:DNA damage response"/>
    <property type="evidence" value="ECO:0007669"/>
    <property type="project" value="UniProtKB-KW"/>
</dbReference>
<dbReference type="GO" id="GO:0045087">
    <property type="term" value="P:innate immune response"/>
    <property type="evidence" value="ECO:0007669"/>
    <property type="project" value="UniProtKB-KW"/>
</dbReference>
<dbReference type="GO" id="GO:0006397">
    <property type="term" value="P:mRNA processing"/>
    <property type="evidence" value="ECO:0007669"/>
    <property type="project" value="UniProtKB-KW"/>
</dbReference>
<dbReference type="GO" id="GO:0050687">
    <property type="term" value="P:negative regulation of defense response to virus"/>
    <property type="evidence" value="ECO:0000250"/>
    <property type="project" value="UniProtKB"/>
</dbReference>
<dbReference type="GO" id="GO:2000042">
    <property type="term" value="P:negative regulation of double-strand break repair via homologous recombination"/>
    <property type="evidence" value="ECO:0000250"/>
    <property type="project" value="UniProtKB"/>
</dbReference>
<dbReference type="GO" id="GO:0032695">
    <property type="term" value="P:negative regulation of interleukin-12 production"/>
    <property type="evidence" value="ECO:0000250"/>
    <property type="project" value="UniProtKB"/>
</dbReference>
<dbReference type="GO" id="GO:0039534">
    <property type="term" value="P:negative regulation of MDA-5 signaling pathway"/>
    <property type="evidence" value="ECO:0000250"/>
    <property type="project" value="UniProtKB"/>
</dbReference>
<dbReference type="GO" id="GO:0048025">
    <property type="term" value="P:negative regulation of mRNA splicing, via spliceosome"/>
    <property type="evidence" value="ECO:0000250"/>
    <property type="project" value="UniProtKB"/>
</dbReference>
<dbReference type="GO" id="GO:0039536">
    <property type="term" value="P:negative regulation of RIG-I signaling pathway"/>
    <property type="evidence" value="ECO:0000250"/>
    <property type="project" value="UniProtKB"/>
</dbReference>
<dbReference type="GO" id="GO:0000122">
    <property type="term" value="P:negative regulation of transcription by RNA polymerase II"/>
    <property type="evidence" value="ECO:0000250"/>
    <property type="project" value="UniProtKB"/>
</dbReference>
<dbReference type="GO" id="GO:0032689">
    <property type="term" value="P:negative regulation of type II interferon production"/>
    <property type="evidence" value="ECO:0000250"/>
    <property type="project" value="UniProtKB"/>
</dbReference>
<dbReference type="GO" id="GO:0043491">
    <property type="term" value="P:phosphatidylinositol 3-kinase/protein kinase B signal transduction"/>
    <property type="evidence" value="ECO:0000250"/>
    <property type="project" value="UniProtKB"/>
</dbReference>
<dbReference type="GO" id="GO:0043065">
    <property type="term" value="P:positive regulation of apoptotic process"/>
    <property type="evidence" value="ECO:0000250"/>
    <property type="project" value="UniProtKB"/>
</dbReference>
<dbReference type="GO" id="GO:0045785">
    <property type="term" value="P:positive regulation of cell adhesion"/>
    <property type="evidence" value="ECO:0000250"/>
    <property type="project" value="UniProtKB"/>
</dbReference>
<dbReference type="GO" id="GO:2000510">
    <property type="term" value="P:positive regulation of dendritic cell chemotaxis"/>
    <property type="evidence" value="ECO:0000250"/>
    <property type="project" value="UniProtKB"/>
</dbReference>
<dbReference type="GO" id="GO:0070131">
    <property type="term" value="P:positive regulation of mitochondrial translation"/>
    <property type="evidence" value="ECO:0000250"/>
    <property type="project" value="UniProtKB"/>
</dbReference>
<dbReference type="GO" id="GO:0090023">
    <property type="term" value="P:positive regulation of neutrophil chemotaxis"/>
    <property type="evidence" value="ECO:0000250"/>
    <property type="project" value="UniProtKB"/>
</dbReference>
<dbReference type="GO" id="GO:0051897">
    <property type="term" value="P:positive regulation of phosphatidylinositol 3-kinase/protein kinase B signal transduction"/>
    <property type="evidence" value="ECO:0000250"/>
    <property type="project" value="UniProtKB"/>
</dbReference>
<dbReference type="GO" id="GO:1900026">
    <property type="term" value="P:positive regulation of substrate adhesion-dependent cell spreading"/>
    <property type="evidence" value="ECO:0000250"/>
    <property type="project" value="UniProtKB"/>
</dbReference>
<dbReference type="GO" id="GO:1901165">
    <property type="term" value="P:positive regulation of trophoblast cell migration"/>
    <property type="evidence" value="ECO:0000250"/>
    <property type="project" value="UniProtKB"/>
</dbReference>
<dbReference type="GO" id="GO:0030449">
    <property type="term" value="P:regulation of complement activation"/>
    <property type="evidence" value="ECO:0000250"/>
    <property type="project" value="UniProtKB"/>
</dbReference>
<dbReference type="GO" id="GO:0008380">
    <property type="term" value="P:RNA splicing"/>
    <property type="evidence" value="ECO:0007669"/>
    <property type="project" value="UniProtKB-KW"/>
</dbReference>
<dbReference type="FunFam" id="3.10.280.10:FF:000001">
    <property type="entry name" value="Complement component 1 Q subcomponent-binding protein, mitochondrial"/>
    <property type="match status" value="1"/>
</dbReference>
<dbReference type="Gene3D" id="3.10.280.10">
    <property type="entry name" value="Mitochondrial glycoprotein"/>
    <property type="match status" value="1"/>
</dbReference>
<dbReference type="InterPro" id="IPR003428">
    <property type="entry name" value="MAM33"/>
</dbReference>
<dbReference type="InterPro" id="IPR036561">
    <property type="entry name" value="MAM33_sf"/>
</dbReference>
<dbReference type="PANTHER" id="PTHR10826">
    <property type="entry name" value="COMPLEMENT COMPONENT 1"/>
    <property type="match status" value="1"/>
</dbReference>
<dbReference type="PANTHER" id="PTHR10826:SF1">
    <property type="entry name" value="COMPLEMENT COMPONENT 1 Q SUBCOMPONENT-BINDING PROTEIN, MITOCHONDRIAL"/>
    <property type="match status" value="1"/>
</dbReference>
<dbReference type="Pfam" id="PF02330">
    <property type="entry name" value="MAM33"/>
    <property type="match status" value="1"/>
</dbReference>
<dbReference type="SUPFAM" id="SSF54529">
    <property type="entry name" value="Mitochondrial glycoprotein MAM33-like"/>
    <property type="match status" value="1"/>
</dbReference>
<evidence type="ECO:0000250" key="1"/>
<evidence type="ECO:0000250" key="2">
    <source>
        <dbReference type="UniProtKB" id="O35658"/>
    </source>
</evidence>
<evidence type="ECO:0000250" key="3">
    <source>
        <dbReference type="UniProtKB" id="O35796"/>
    </source>
</evidence>
<evidence type="ECO:0000250" key="4">
    <source>
        <dbReference type="UniProtKB" id="Q07021"/>
    </source>
</evidence>
<evidence type="ECO:0000256" key="5">
    <source>
        <dbReference type="SAM" id="MobiDB-lite"/>
    </source>
</evidence>
<evidence type="ECO:0000269" key="6">
    <source>
    </source>
</evidence>
<evidence type="ECO:0000269" key="7">
    <source>
    </source>
</evidence>
<evidence type="ECO:0000305" key="8"/>